<evidence type="ECO:0000250" key="1"/>
<evidence type="ECO:0000256" key="2">
    <source>
        <dbReference type="SAM" id="MobiDB-lite"/>
    </source>
</evidence>
<evidence type="ECO:0000269" key="3">
    <source>
    </source>
</evidence>
<evidence type="ECO:0000269" key="4">
    <source>
    </source>
</evidence>
<evidence type="ECO:0000269" key="5">
    <source>
    </source>
</evidence>
<evidence type="ECO:0000269" key="6">
    <source>
    </source>
</evidence>
<evidence type="ECO:0000305" key="7"/>
<evidence type="ECO:0007744" key="8">
    <source>
    </source>
</evidence>
<protein>
    <recommendedName>
        <fullName>Scm-like with four MBT domains protein 1</fullName>
    </recommendedName>
</protein>
<accession>Q9JMD1</accession>
<accession>Q6NZD3</accession>
<accession>Q8CFS1</accession>
<keyword id="KW-0156">Chromatin regulator</keyword>
<keyword id="KW-0221">Differentiation</keyword>
<keyword id="KW-0539">Nucleus</keyword>
<keyword id="KW-0597">Phosphoprotein</keyword>
<keyword id="KW-1185">Reference proteome</keyword>
<keyword id="KW-0677">Repeat</keyword>
<keyword id="KW-0678">Repressor</keyword>
<keyword id="KW-0744">Spermatogenesis</keyword>
<keyword id="KW-0804">Transcription</keyword>
<keyword id="KW-0805">Transcription regulation</keyword>
<dbReference type="EMBL" id="AB032165">
    <property type="protein sequence ID" value="BAA96305.1"/>
    <property type="molecule type" value="mRNA"/>
</dbReference>
<dbReference type="EMBL" id="BC036972">
    <property type="protein sequence ID" value="AAH36972.1"/>
    <property type="status" value="ALT_SEQ"/>
    <property type="molecule type" value="mRNA"/>
</dbReference>
<dbReference type="EMBL" id="BC066188">
    <property type="protein sequence ID" value="AAH66188.1"/>
    <property type="status" value="ALT_SEQ"/>
    <property type="molecule type" value="mRNA"/>
</dbReference>
<dbReference type="CCDS" id="CCDS26897.1"/>
<dbReference type="RefSeq" id="NP_001160003.1">
    <property type="nucleotide sequence ID" value="NM_001166531.1"/>
</dbReference>
<dbReference type="RefSeq" id="NP_001160004.1">
    <property type="nucleotide sequence ID" value="NM_001166532.1"/>
</dbReference>
<dbReference type="RefSeq" id="NP_062333.1">
    <property type="nucleotide sequence ID" value="NM_019460.2"/>
</dbReference>
<dbReference type="RefSeq" id="XP_006519350.1">
    <property type="nucleotide sequence ID" value="XM_006519287.4"/>
</dbReference>
<dbReference type="RefSeq" id="XP_006519351.1">
    <property type="nucleotide sequence ID" value="XM_006519288.4"/>
</dbReference>
<dbReference type="RefSeq" id="XP_006519352.1">
    <property type="nucleotide sequence ID" value="XM_006519289.5"/>
</dbReference>
<dbReference type="RefSeq" id="XP_011243422.1">
    <property type="nucleotide sequence ID" value="XM_011245120.3"/>
</dbReference>
<dbReference type="RefSeq" id="XP_011243423.1">
    <property type="nucleotide sequence ID" value="XM_011245121.2"/>
</dbReference>
<dbReference type="RefSeq" id="XP_030103749.1">
    <property type="nucleotide sequence ID" value="XM_030247889.2"/>
</dbReference>
<dbReference type="SMR" id="Q9JMD1"/>
<dbReference type="BioGRID" id="207710">
    <property type="interactions" value="3"/>
</dbReference>
<dbReference type="FunCoup" id="Q9JMD1">
    <property type="interactions" value="2042"/>
</dbReference>
<dbReference type="STRING" id="10090.ENSMUSP00000056744"/>
<dbReference type="iPTMnet" id="Q9JMD1"/>
<dbReference type="PhosphoSitePlus" id="Q9JMD1"/>
<dbReference type="PaxDb" id="10090-ENSMUSP00000056744"/>
<dbReference type="ProteomicsDB" id="261519"/>
<dbReference type="Antibodypedia" id="31362">
    <property type="antibodies" value="141 antibodies from 20 providers"/>
</dbReference>
<dbReference type="DNASU" id="54650"/>
<dbReference type="Ensembl" id="ENSMUST00000054230.12">
    <property type="protein sequence ID" value="ENSMUSP00000056744.5"/>
    <property type="gene ID" value="ENSMUSG00000006527.17"/>
</dbReference>
<dbReference type="Ensembl" id="ENSMUST00000112184.10">
    <property type="protein sequence ID" value="ENSMUSP00000107802.2"/>
    <property type="gene ID" value="ENSMUSG00000006527.17"/>
</dbReference>
<dbReference type="Ensembl" id="ENSMUST00000228006.2">
    <property type="protein sequence ID" value="ENSMUSP00000153861.2"/>
    <property type="gene ID" value="ENSMUSG00000006527.17"/>
</dbReference>
<dbReference type="GeneID" id="54650"/>
<dbReference type="KEGG" id="mmu:54650"/>
<dbReference type="UCSC" id="uc007svp.2">
    <property type="organism name" value="mouse"/>
</dbReference>
<dbReference type="AGR" id="MGI:1859609"/>
<dbReference type="CTD" id="51460"/>
<dbReference type="MGI" id="MGI:1859609">
    <property type="gene designation" value="Sfmbt1"/>
</dbReference>
<dbReference type="VEuPathDB" id="HostDB:ENSMUSG00000006527"/>
<dbReference type="eggNOG" id="KOG3766">
    <property type="taxonomic scope" value="Eukaryota"/>
</dbReference>
<dbReference type="GeneTree" id="ENSGT00940000157363"/>
<dbReference type="HOGENOM" id="CLU_005352_0_0_1"/>
<dbReference type="InParanoid" id="Q9JMD1"/>
<dbReference type="OMA" id="HWSLKNG"/>
<dbReference type="OrthoDB" id="5917609at2759"/>
<dbReference type="PhylomeDB" id="Q9JMD1"/>
<dbReference type="TreeFam" id="TF316498"/>
<dbReference type="BioGRID-ORCS" id="54650">
    <property type="hits" value="3 hits in 80 CRISPR screens"/>
</dbReference>
<dbReference type="ChiTaRS" id="Sfmbt1">
    <property type="organism name" value="mouse"/>
</dbReference>
<dbReference type="PRO" id="PR:Q9JMD1"/>
<dbReference type="Proteomes" id="UP000000589">
    <property type="component" value="Chromosome 14"/>
</dbReference>
<dbReference type="RNAct" id="Q9JMD1">
    <property type="molecule type" value="protein"/>
</dbReference>
<dbReference type="Bgee" id="ENSMUSG00000006527">
    <property type="expression patterns" value="Expressed in animal zygote and 230 other cell types or tissues"/>
</dbReference>
<dbReference type="ExpressionAtlas" id="Q9JMD1">
    <property type="expression patterns" value="baseline and differential"/>
</dbReference>
<dbReference type="GO" id="GO:0005654">
    <property type="term" value="C:nucleoplasm"/>
    <property type="evidence" value="ECO:0007669"/>
    <property type="project" value="Ensembl"/>
</dbReference>
<dbReference type="GO" id="GO:0005634">
    <property type="term" value="C:nucleus"/>
    <property type="evidence" value="ECO:0000250"/>
    <property type="project" value="UniProtKB"/>
</dbReference>
<dbReference type="GO" id="GO:0042393">
    <property type="term" value="F:histone binding"/>
    <property type="evidence" value="ECO:0000250"/>
    <property type="project" value="UniProtKB"/>
</dbReference>
<dbReference type="GO" id="GO:0003714">
    <property type="term" value="F:transcription corepressor activity"/>
    <property type="evidence" value="ECO:0007669"/>
    <property type="project" value="InterPro"/>
</dbReference>
<dbReference type="GO" id="GO:0030154">
    <property type="term" value="P:cell differentiation"/>
    <property type="evidence" value="ECO:0007669"/>
    <property type="project" value="UniProtKB-KW"/>
</dbReference>
<dbReference type="GO" id="GO:0006325">
    <property type="term" value="P:chromatin organization"/>
    <property type="evidence" value="ECO:0007669"/>
    <property type="project" value="UniProtKB-KW"/>
</dbReference>
<dbReference type="GO" id="GO:0045892">
    <property type="term" value="P:negative regulation of DNA-templated transcription"/>
    <property type="evidence" value="ECO:0000250"/>
    <property type="project" value="UniProtKB"/>
</dbReference>
<dbReference type="GO" id="GO:0048635">
    <property type="term" value="P:negative regulation of muscle organ development"/>
    <property type="evidence" value="ECO:0000250"/>
    <property type="project" value="UniProtKB"/>
</dbReference>
<dbReference type="GO" id="GO:0007283">
    <property type="term" value="P:spermatogenesis"/>
    <property type="evidence" value="ECO:0000304"/>
    <property type="project" value="UniProtKB"/>
</dbReference>
<dbReference type="CDD" id="cd20111">
    <property type="entry name" value="MBT_SFMBT1_rpt1"/>
    <property type="match status" value="1"/>
</dbReference>
<dbReference type="CDD" id="cd20113">
    <property type="entry name" value="MBT_SFMBT1_rpt2"/>
    <property type="match status" value="1"/>
</dbReference>
<dbReference type="CDD" id="cd20115">
    <property type="entry name" value="MBT_SFMBT1_rpt3"/>
    <property type="match status" value="1"/>
</dbReference>
<dbReference type="CDD" id="cd09581">
    <property type="entry name" value="SAM_Scm-like-4MBT1_2"/>
    <property type="match status" value="1"/>
</dbReference>
<dbReference type="FunFam" id="2.30.30.140:FF:000010">
    <property type="entry name" value="MBT domain-containing protein 1 isoform X1"/>
    <property type="match status" value="1"/>
</dbReference>
<dbReference type="FunFam" id="2.30.30.140:FF:000072">
    <property type="entry name" value="Scm like with four mbt domains 2"/>
    <property type="match status" value="1"/>
</dbReference>
<dbReference type="FunFam" id="2.30.30.140:FF:000041">
    <property type="entry name" value="Scm-like with four mbt domains 1, isoform CRA_b"/>
    <property type="match status" value="1"/>
</dbReference>
<dbReference type="FunFam" id="3.90.1150.190:FF:000002">
    <property type="entry name" value="Scm-like with four MBT domains protein 2"/>
    <property type="match status" value="1"/>
</dbReference>
<dbReference type="FunFam" id="1.10.150.50:FF:000027">
    <property type="entry name" value="scm-like with four MBT domains protein 2"/>
    <property type="match status" value="1"/>
</dbReference>
<dbReference type="Gene3D" id="2.30.30.140">
    <property type="match status" value="4"/>
</dbReference>
<dbReference type="Gene3D" id="3.90.1150.190">
    <property type="entry name" value="SLED domain"/>
    <property type="match status" value="1"/>
</dbReference>
<dbReference type="Gene3D" id="1.10.150.50">
    <property type="entry name" value="Transcription Factor, Ets-1"/>
    <property type="match status" value="1"/>
</dbReference>
<dbReference type="InterPro" id="IPR004092">
    <property type="entry name" value="Mbt"/>
</dbReference>
<dbReference type="InterPro" id="IPR047352">
    <property type="entry name" value="MBT_SFMBT1_rpt2"/>
</dbReference>
<dbReference type="InterPro" id="IPR047351">
    <property type="entry name" value="MBT_SFMBT1_rpt3"/>
</dbReference>
<dbReference type="InterPro" id="IPR050548">
    <property type="entry name" value="PcG_chromatin_remod_factors"/>
</dbReference>
<dbReference type="InterPro" id="IPR001660">
    <property type="entry name" value="SAM"/>
</dbReference>
<dbReference type="InterPro" id="IPR013761">
    <property type="entry name" value="SAM/pointed_sf"/>
</dbReference>
<dbReference type="InterPro" id="IPR037604">
    <property type="entry name" value="Scm-like-4MBT1/2_SAM"/>
</dbReference>
<dbReference type="InterPro" id="IPR021987">
    <property type="entry name" value="SLED"/>
</dbReference>
<dbReference type="InterPro" id="IPR038348">
    <property type="entry name" value="SLED_sf"/>
</dbReference>
<dbReference type="PANTHER" id="PTHR12247">
    <property type="entry name" value="POLYCOMB GROUP PROTEIN"/>
    <property type="match status" value="1"/>
</dbReference>
<dbReference type="PANTHER" id="PTHR12247:SF77">
    <property type="entry name" value="SCM-LIKE WITH FOUR MBT DOMAINS PROTEIN 1"/>
    <property type="match status" value="1"/>
</dbReference>
<dbReference type="Pfam" id="PF02820">
    <property type="entry name" value="MBT"/>
    <property type="match status" value="4"/>
</dbReference>
<dbReference type="Pfam" id="PF00536">
    <property type="entry name" value="SAM_1"/>
    <property type="match status" value="1"/>
</dbReference>
<dbReference type="Pfam" id="PF12140">
    <property type="entry name" value="SLED"/>
    <property type="match status" value="1"/>
</dbReference>
<dbReference type="SMART" id="SM00561">
    <property type="entry name" value="MBT"/>
    <property type="match status" value="4"/>
</dbReference>
<dbReference type="SMART" id="SM00454">
    <property type="entry name" value="SAM"/>
    <property type="match status" value="1"/>
</dbReference>
<dbReference type="SUPFAM" id="SSF47769">
    <property type="entry name" value="SAM/Pointed domain"/>
    <property type="match status" value="1"/>
</dbReference>
<dbReference type="SUPFAM" id="SSF63748">
    <property type="entry name" value="Tudor/PWWP/MBT"/>
    <property type="match status" value="4"/>
</dbReference>
<dbReference type="PROSITE" id="PS51079">
    <property type="entry name" value="MBT"/>
    <property type="match status" value="4"/>
</dbReference>
<organism>
    <name type="scientific">Mus musculus</name>
    <name type="common">Mouse</name>
    <dbReference type="NCBI Taxonomy" id="10090"/>
    <lineage>
        <taxon>Eukaryota</taxon>
        <taxon>Metazoa</taxon>
        <taxon>Chordata</taxon>
        <taxon>Craniata</taxon>
        <taxon>Vertebrata</taxon>
        <taxon>Euteleostomi</taxon>
        <taxon>Mammalia</taxon>
        <taxon>Eutheria</taxon>
        <taxon>Euarchontoglires</taxon>
        <taxon>Glires</taxon>
        <taxon>Rodentia</taxon>
        <taxon>Myomorpha</taxon>
        <taxon>Muroidea</taxon>
        <taxon>Muridae</taxon>
        <taxon>Murinae</taxon>
        <taxon>Mus</taxon>
        <taxon>Mus</taxon>
    </lineage>
</organism>
<name>SMBT1_MOUSE</name>
<sequence length="863" mass="97338">MSGEQQLDADLGSGVEVEEFSWEDYLEETGSTTVPYASFKHVDIRLQNGFAPGMKLEVALKNDPETYWVATIITACEQLLLLRYEGYGEDRKADFWCDIRKAGLYPIGWCQQNKKTLEAPEGIRDKVSDWNAFLQQTLIGACGPPVSLLEGLRNGRNPLDLIAPGSKLECQDFRDSLSTWLVTVVENIGGRLKLRYEGLESRDGFEHWLYYLDPFLHHIGWAAQQGCDLQPPLAIKHLKSEADWQEILAKVKEEEPLPSYLFKDKQVIGTHEFSINMKLEAVDPWSPFGISPATIAKVFDDKYFLVEMDDLRPEDHTRRSFVCHANSPGIFPVQWSLKNGLHINPPPGFRSQDFDWADYLKQCGAEAAPQKCFPQSISEHQFKENMKLEAVNPLFPEEVCIATVTAVRGSYLWLQLEGSKKPVPEFIVSAESMNIFPLGWCETNGHPLSTPRRARGHKLRKIAVVQPEKQILSSRTVHEGLKNQLNSTHSVMINGKYCCPKIYFNHRCFSGPYLNKGRIAELPQCVGPGNCVLVLREVLTLLINAAYKPSRVLRELQLDKDSVWHGCGEVLKAKYKGKSYRATVEIVRTADRVTEFCRQTCIKLECCPNLFGPRMVLDTCSENCSVLTKTKYTHYYGKKKNKRIGRPPGGHSNLSCALKKSSKRRKRRKNIFVHKKKRSSASVDNTPVGSPQGSGGEDEEDADDGDEDSLTEGSTSEQQEELQEESEVSEKKSSSSSPTQSETPTPLPPDTQTNKRDAQTSSVSDDENKPPSPKEIRIEVDERLHLDSNPLKWSVADVVRFIRSTDCAPLARIFLDQEIDGQALLLLTLPTVQECMDLKLGPAIKLCHHIERIKFAFYEQFAN</sequence>
<reference key="1">
    <citation type="journal article" date="2000" name="Gene">
        <title>Cloning of a novel murine gene Sfmbt, Scm-related gene containing four mbt domains, structurally belonging to the Polycomb group of genes.</title>
        <authorList>
            <person name="Usui H."/>
            <person name="Ichikawa T."/>
            <person name="Kobayashi K."/>
            <person name="Kumanishi T."/>
        </authorList>
    </citation>
    <scope>NUCLEOTIDE SEQUENCE [MRNA]</scope>
    <scope>TISSUE SPECIFICITY</scope>
    <source>
        <strain>C57BL/6J</strain>
        <tissue>Brain</tissue>
    </source>
</reference>
<reference key="2">
    <citation type="journal article" date="2004" name="Genome Res.">
        <title>The status, quality, and expansion of the NIH full-length cDNA project: the Mammalian Gene Collection (MGC).</title>
        <authorList>
            <consortium name="The MGC Project Team"/>
        </authorList>
    </citation>
    <scope>NUCLEOTIDE SEQUENCE [LARGE SCALE MRNA] OF 1-644</scope>
    <source>
        <tissue>Eye</tissue>
    </source>
</reference>
<reference key="3">
    <citation type="journal article" date="2010" name="Cell">
        <title>A tissue-specific atlas of mouse protein phosphorylation and expression.</title>
        <authorList>
            <person name="Huttlin E.L."/>
            <person name="Jedrychowski M.P."/>
            <person name="Elias J.E."/>
            <person name="Goswami T."/>
            <person name="Rad R."/>
            <person name="Beausoleil S.A."/>
            <person name="Villen J."/>
            <person name="Haas W."/>
            <person name="Sowa M.E."/>
            <person name="Gygi S.P."/>
        </authorList>
    </citation>
    <scope>PHOSPHORYLATION [LARGE SCALE ANALYSIS] AT SER-764 AND SER-772</scope>
    <scope>IDENTIFICATION BY MASS SPECTROMETRY [LARGE SCALE ANALYSIS]</scope>
    <source>
        <tissue>Spleen</tissue>
        <tissue>Testis</tissue>
    </source>
</reference>
<reference key="4">
    <citation type="journal article" date="2013" name="Genes Dev.">
        <title>SFMBT1 functions with LSD1 to regulate expression of canonical histone genes and chromatin-related factors.</title>
        <authorList>
            <person name="Zhang J."/>
            <person name="Bonasio R."/>
            <person name="Strino F."/>
            <person name="Kluger Y."/>
            <person name="Holloway J.K."/>
            <person name="Modzelewski A.J."/>
            <person name="Cohen P.E."/>
            <person name="Reinberg D."/>
        </authorList>
    </citation>
    <scope>IDENTIFICATION IN THE SLC COMPLEX</scope>
    <scope>TISSUE SPECIFICITY</scope>
</reference>
<reference key="5">
    <citation type="journal article" date="2013" name="J. Biol. Chem.">
        <title>Proteomic and functional analyses reveal the role of chromatin reader SFMBT1 in regulating epigenetic silencing and the myogenic gene program.</title>
        <authorList>
            <person name="Lin S."/>
            <person name="Shen H."/>
            <person name="Li J.L."/>
            <person name="Tang S."/>
            <person name="Gu Y."/>
            <person name="Chen Z."/>
            <person name="Hu C."/>
            <person name="Rice J.C."/>
            <person name="Lu J."/>
            <person name="Wu L."/>
        </authorList>
    </citation>
    <scope>FUNCTION</scope>
    <scope>INTERACTION WITH MYOD1</scope>
    <scope>DEVELOPMENTAL STAGE</scope>
</reference>
<reference key="6">
    <citation type="journal article" date="2019" name="J. Biol. Chem.">
        <title>Proteolysis of methylated SOX2 protein is regulated by L3MBTL3 and CRL4-DCAF5 ubiquitin ligase.</title>
        <authorList>
            <person name="Zhang C."/>
            <person name="Leng F."/>
            <person name="Saxena L."/>
            <person name="Hoang N."/>
            <person name="Yu J."/>
            <person name="Alejo S."/>
            <person name="Lee L."/>
            <person name="Qi D."/>
            <person name="Lu F."/>
            <person name="Sun H."/>
            <person name="Zhang H."/>
        </authorList>
    </citation>
    <scope>INTERACTION WITH L3MBTL3</scope>
</reference>
<proteinExistence type="evidence at protein level"/>
<feature type="chain" id="PRO_0000071967" description="Scm-like with four MBT domains protein 1">
    <location>
        <begin position="1"/>
        <end position="863"/>
    </location>
</feature>
<feature type="repeat" description="MBT 1">
    <location>
        <begin position="20"/>
        <end position="120"/>
    </location>
</feature>
<feature type="repeat" description="MBT 2">
    <location>
        <begin position="128"/>
        <end position="232"/>
    </location>
</feature>
<feature type="repeat" description="MBT 3">
    <location>
        <begin position="242"/>
        <end position="346"/>
    </location>
</feature>
<feature type="repeat" description="MBT 4">
    <location>
        <begin position="354"/>
        <end position="451"/>
    </location>
</feature>
<feature type="domain" description="SAM">
    <location>
        <begin position="793"/>
        <end position="861"/>
    </location>
</feature>
<feature type="region of interest" description="Disordered" evidence="2">
    <location>
        <begin position="638"/>
        <end position="773"/>
    </location>
</feature>
<feature type="compositionally biased region" description="Basic residues" evidence="2">
    <location>
        <begin position="660"/>
        <end position="679"/>
    </location>
</feature>
<feature type="compositionally biased region" description="Polar residues" evidence="2">
    <location>
        <begin position="680"/>
        <end position="691"/>
    </location>
</feature>
<feature type="compositionally biased region" description="Acidic residues" evidence="2">
    <location>
        <begin position="696"/>
        <end position="710"/>
    </location>
</feature>
<feature type="compositionally biased region" description="Acidic residues" evidence="2">
    <location>
        <begin position="718"/>
        <end position="727"/>
    </location>
</feature>
<feature type="compositionally biased region" description="Low complexity" evidence="2">
    <location>
        <begin position="734"/>
        <end position="744"/>
    </location>
</feature>
<feature type="modified residue" description="Phosphoserine" evidence="8">
    <location>
        <position position="764"/>
    </location>
</feature>
<feature type="modified residue" description="Phosphoserine" evidence="8">
    <location>
        <position position="772"/>
    </location>
</feature>
<gene>
    <name type="primary">Sfmbt1</name>
</gene>
<comment type="function">
    <text evidence="4">Histone-binding protein, which is part of various corepressor complexes. Mediates the recruitment of corepressor complexes to target genes, followed by chromatin compaction and repression of transcription. Plays a role during myogenesis: required for the maintenance of undifferentiated states of myogenic progenitor cells via interaction with MYOD1. Interaction with MYOD1 leads to the recruitment of associated corepressors and silencing of MYOD1 target genes. Part of the SLC complex in germ cells, where it may play a role during spermatogenesis.</text>
</comment>
<comment type="subunit">
    <text evidence="1 4 5 6">Interacts with MYOD1 (By similarity). Component of the SLC (SFMBT1-LSD1-CoREST) corepressor complex, which also contains KDM1A/LSD1 and RCOR1/CoREST. Interacts with KDM1A/LSD1 and RCOR1/CoREST (By similarity). Interacts with MYOD1. Interacts with L3MBTL3 (PubMed:30442713).</text>
</comment>
<comment type="subcellular location">
    <subcellularLocation>
        <location evidence="1">Nucleus</location>
    </subcellularLocation>
</comment>
<comment type="tissue specificity">
    <text evidence="3 5">Highly expressed in the testis, low expression is detected in brain, kidney, heart and lung. Highly expressed in germ cells, where it associates with the synaptic regions of meiotic chromosomes in pachytene stage spermatocytes.</text>
</comment>
<comment type="developmental stage">
    <text evidence="4">Highly expressed in undifferentiated myoblasts and expression is reduced during the course of differentiation.</text>
</comment>
<comment type="domain">
    <text evidence="1">The MBT repeats mediate binding to histones tails; however, in contrast to other MBT repeats, does not bind specific histone lysine modifications. The MBT repeats lack the conserved Asp and aromatic cage at conserved positions (By similarity).</text>
</comment>
<comment type="sequence caution" evidence="7">
    <conflict type="miscellaneous discrepancy">
        <sequence resource="EMBL-CDS" id="AAH36972"/>
    </conflict>
    <text>Contaminating sequence. Potential poly-A sequence.</text>
</comment>
<comment type="sequence caution" evidence="7">
    <conflict type="erroneous termination">
        <sequence resource="EMBL-CDS" id="AAH66188"/>
    </conflict>
    <text>Truncated C-terminus.</text>
</comment>